<protein>
    <recommendedName>
        <fullName evidence="1">Putative poly(A) polymerase catalytic subunit</fullName>
        <ecNumber>2.7.7.19</ecNumber>
    </recommendedName>
</protein>
<dbReference type="EC" id="2.7.7.19"/>
<dbReference type="EMBL" id="AY261360">
    <property type="status" value="NOT_ANNOTATED_CDS"/>
    <property type="molecule type" value="Genomic_DNA"/>
</dbReference>
<dbReference type="SMR" id="P0C9D5"/>
<dbReference type="Proteomes" id="UP000000861">
    <property type="component" value="Segment"/>
</dbReference>
<dbReference type="GO" id="GO:0044423">
    <property type="term" value="C:virion component"/>
    <property type="evidence" value="ECO:0007669"/>
    <property type="project" value="UniProtKB-KW"/>
</dbReference>
<dbReference type="GO" id="GO:0005524">
    <property type="term" value="F:ATP binding"/>
    <property type="evidence" value="ECO:0007669"/>
    <property type="project" value="UniProtKB-KW"/>
</dbReference>
<dbReference type="GO" id="GO:1990817">
    <property type="term" value="F:poly(A) RNA polymerase activity"/>
    <property type="evidence" value="ECO:0007669"/>
    <property type="project" value="UniProtKB-EC"/>
</dbReference>
<dbReference type="GO" id="GO:0006397">
    <property type="term" value="P:mRNA processing"/>
    <property type="evidence" value="ECO:0007669"/>
    <property type="project" value="UniProtKB-KW"/>
</dbReference>
<dbReference type="CDD" id="cd20924">
    <property type="entry name" value="polyA_pol_Asfar"/>
    <property type="match status" value="1"/>
</dbReference>
<dbReference type="InterPro" id="IPR045355">
    <property type="entry name" value="PolyA_pol_cat_su"/>
</dbReference>
<dbReference type="Pfam" id="PF19244">
    <property type="entry name" value="Poly_A_pol_cat"/>
    <property type="match status" value="1"/>
</dbReference>
<sequence length="475" mass="54989">MSSLPKTDFNVPKYQLIAQKREANAAEIEAALEVVREFIIKKKLILYGGIAIDYALHLKGSSIYPEGERPDFDMFSPNHVEDAYELADLLYEKGFKQVGTVRAIHVQTMRVRTDFVWVADLSYMPSNIFDTIPTLTYKNLKIIHPDYQRAGLHLAFCFPFDNPPREDVFSRFKKDLQRYNLIEKYYPIPVVPVKSTYENKTFSIPFKRVAIHGFAAYALLYQTLNELRMTCKVPEWKTEFPQPSYSYHKNDKNITLTVDMPKAYPSLVLATYNPEEIIKEMGLHLTEICEPYMDYSPPIFKTKDIHFFSTMFKELAISMIQDNIIVVSPQYLLLYFLYGAFATPADKALFLFYYNATLWILEKADSLLNIIQKQTSPEEFMKFANTSPFVLTTRVLRCSQDRCTFSPAYRISLANDVQQSQLPLPKTHFLSNFLPDISTLPYNYYPGKGKDRPTNFSYEKNLLFNIGGKCTQLAM</sequence>
<gene>
    <name type="ordered locus">Ken-079</name>
</gene>
<keyword id="KW-0067">ATP-binding</keyword>
<keyword id="KW-0426">Late protein</keyword>
<keyword id="KW-0507">mRNA processing</keyword>
<keyword id="KW-0547">Nucleotide-binding</keyword>
<keyword id="KW-0804">Transcription</keyword>
<keyword id="KW-0808">Transferase</keyword>
<keyword id="KW-0946">Virion</keyword>
<evidence type="ECO:0000250" key="1">
    <source>
        <dbReference type="UniProtKB" id="Q65159"/>
    </source>
</evidence>
<evidence type="ECO:0000305" key="2"/>
<organismHost>
    <name type="scientific">Ornithodoros</name>
    <name type="common">relapsing fever ticks</name>
    <dbReference type="NCBI Taxonomy" id="6937"/>
</organismHost>
<organismHost>
    <name type="scientific">Phacochoerus aethiopicus</name>
    <name type="common">Warthog</name>
    <dbReference type="NCBI Taxonomy" id="85517"/>
</organismHost>
<organismHost>
    <name type="scientific">Phacochoerus africanus</name>
    <name type="common">Warthog</name>
    <dbReference type="NCBI Taxonomy" id="41426"/>
</organismHost>
<organismHost>
    <name type="scientific">Potamochoerus larvatus</name>
    <name type="common">Bushpig</name>
    <dbReference type="NCBI Taxonomy" id="273792"/>
</organismHost>
<organismHost>
    <name type="scientific">Sus scrofa</name>
    <name type="common">Pig</name>
    <dbReference type="NCBI Taxonomy" id="9823"/>
</organismHost>
<name>PAP1_ASFK5</name>
<comment type="function">
    <text evidence="2">Polymerase that creates the 3'-poly(A) tail of mRNA's.</text>
</comment>
<comment type="catalytic activity">
    <reaction>
        <text>RNA(n) + ATP = RNA(n)-3'-adenine ribonucleotide + diphosphate</text>
        <dbReference type="Rhea" id="RHEA:11332"/>
        <dbReference type="Rhea" id="RHEA-COMP:14527"/>
        <dbReference type="Rhea" id="RHEA-COMP:17347"/>
        <dbReference type="ChEBI" id="CHEBI:30616"/>
        <dbReference type="ChEBI" id="CHEBI:33019"/>
        <dbReference type="ChEBI" id="CHEBI:140395"/>
        <dbReference type="ChEBI" id="CHEBI:173115"/>
        <dbReference type="EC" id="2.7.7.19"/>
    </reaction>
</comment>
<comment type="subcellular location">
    <subcellularLocation>
        <location evidence="1">Virion</location>
    </subcellularLocation>
</comment>
<comment type="induction">
    <text evidence="2">Expressed in the late phase of the viral replicative cycle.</text>
</comment>
<comment type="similarity">
    <text evidence="2">Belongs to the poxviridae poly(A) polymerase catalytic subunit family. Highly divergent.</text>
</comment>
<accession>P0C9D5</accession>
<feature type="chain" id="PRO_0000373151" description="Putative poly(A) polymerase catalytic subunit">
    <location>
        <begin position="1"/>
        <end position="475"/>
    </location>
</feature>
<reference key="1">
    <citation type="submission" date="2003-03" db="EMBL/GenBank/DDBJ databases">
        <title>African swine fever virus genomes.</title>
        <authorList>
            <person name="Kutish G.F."/>
            <person name="Rock D.L."/>
        </authorList>
    </citation>
    <scope>NUCLEOTIDE SEQUENCE [LARGE SCALE GENOMIC DNA]</scope>
</reference>
<organism>
    <name type="scientific">African swine fever virus (isolate Pig/Kenya/KEN-50/1950)</name>
    <name type="common">ASFV</name>
    <dbReference type="NCBI Taxonomy" id="561445"/>
    <lineage>
        <taxon>Viruses</taxon>
        <taxon>Varidnaviria</taxon>
        <taxon>Bamfordvirae</taxon>
        <taxon>Nucleocytoviricota</taxon>
        <taxon>Pokkesviricetes</taxon>
        <taxon>Asfuvirales</taxon>
        <taxon>Asfarviridae</taxon>
        <taxon>Asfivirus</taxon>
        <taxon>African swine fever virus</taxon>
    </lineage>
</organism>
<proteinExistence type="inferred from homology"/>